<name>EX7L_ECOLC</name>
<keyword id="KW-0963">Cytoplasm</keyword>
<keyword id="KW-0269">Exonuclease</keyword>
<keyword id="KW-0378">Hydrolase</keyword>
<keyword id="KW-0540">Nuclease</keyword>
<dbReference type="EC" id="3.1.11.6" evidence="1"/>
<dbReference type="EMBL" id="CP000946">
    <property type="protein sequence ID" value="ACA76835.1"/>
    <property type="molecule type" value="Genomic_DNA"/>
</dbReference>
<dbReference type="RefSeq" id="WP_000937920.1">
    <property type="nucleotide sequence ID" value="NZ_MTFT01000002.1"/>
</dbReference>
<dbReference type="SMR" id="B1IWF2"/>
<dbReference type="KEGG" id="ecl:EcolC_1168"/>
<dbReference type="HOGENOM" id="CLU_023625_3_1_6"/>
<dbReference type="GO" id="GO:0005737">
    <property type="term" value="C:cytoplasm"/>
    <property type="evidence" value="ECO:0007669"/>
    <property type="project" value="UniProtKB-SubCell"/>
</dbReference>
<dbReference type="GO" id="GO:0009318">
    <property type="term" value="C:exodeoxyribonuclease VII complex"/>
    <property type="evidence" value="ECO:0007669"/>
    <property type="project" value="InterPro"/>
</dbReference>
<dbReference type="GO" id="GO:0008855">
    <property type="term" value="F:exodeoxyribonuclease VII activity"/>
    <property type="evidence" value="ECO:0007669"/>
    <property type="project" value="UniProtKB-UniRule"/>
</dbReference>
<dbReference type="GO" id="GO:0003676">
    <property type="term" value="F:nucleic acid binding"/>
    <property type="evidence" value="ECO:0007669"/>
    <property type="project" value="InterPro"/>
</dbReference>
<dbReference type="GO" id="GO:0006308">
    <property type="term" value="P:DNA catabolic process"/>
    <property type="evidence" value="ECO:0007669"/>
    <property type="project" value="UniProtKB-UniRule"/>
</dbReference>
<dbReference type="CDD" id="cd04489">
    <property type="entry name" value="ExoVII_LU_OBF"/>
    <property type="match status" value="1"/>
</dbReference>
<dbReference type="HAMAP" id="MF_00378">
    <property type="entry name" value="Exonuc_7_L"/>
    <property type="match status" value="1"/>
</dbReference>
<dbReference type="InterPro" id="IPR003753">
    <property type="entry name" value="Exonuc_VII_L"/>
</dbReference>
<dbReference type="InterPro" id="IPR020579">
    <property type="entry name" value="Exonuc_VII_lsu_C"/>
</dbReference>
<dbReference type="InterPro" id="IPR025824">
    <property type="entry name" value="OB-fold_nuc-bd_dom"/>
</dbReference>
<dbReference type="NCBIfam" id="TIGR00237">
    <property type="entry name" value="xseA"/>
    <property type="match status" value="1"/>
</dbReference>
<dbReference type="PANTHER" id="PTHR30008">
    <property type="entry name" value="EXODEOXYRIBONUCLEASE 7 LARGE SUBUNIT"/>
    <property type="match status" value="1"/>
</dbReference>
<dbReference type="PANTHER" id="PTHR30008:SF0">
    <property type="entry name" value="EXODEOXYRIBONUCLEASE 7 LARGE SUBUNIT"/>
    <property type="match status" value="1"/>
</dbReference>
<dbReference type="Pfam" id="PF02601">
    <property type="entry name" value="Exonuc_VII_L"/>
    <property type="match status" value="1"/>
</dbReference>
<dbReference type="Pfam" id="PF13742">
    <property type="entry name" value="tRNA_anti_2"/>
    <property type="match status" value="1"/>
</dbReference>
<evidence type="ECO:0000255" key="1">
    <source>
        <dbReference type="HAMAP-Rule" id="MF_00378"/>
    </source>
</evidence>
<comment type="function">
    <text evidence="1">Bidirectionally degrades single-stranded DNA into large acid-insoluble oligonucleotides, which are then degraded further into small acid-soluble oligonucleotides.</text>
</comment>
<comment type="catalytic activity">
    <reaction evidence="1">
        <text>Exonucleolytic cleavage in either 5'- to 3'- or 3'- to 5'-direction to yield nucleoside 5'-phosphates.</text>
        <dbReference type="EC" id="3.1.11.6"/>
    </reaction>
</comment>
<comment type="subunit">
    <text evidence="1">Heterooligomer composed of large and small subunits.</text>
</comment>
<comment type="subcellular location">
    <subcellularLocation>
        <location evidence="1">Cytoplasm</location>
    </subcellularLocation>
</comment>
<comment type="similarity">
    <text evidence="1">Belongs to the XseA family.</text>
</comment>
<protein>
    <recommendedName>
        <fullName evidence="1">Exodeoxyribonuclease 7 large subunit</fullName>
        <ecNumber evidence="1">3.1.11.6</ecNumber>
    </recommendedName>
    <alternativeName>
        <fullName evidence="1">Exodeoxyribonuclease VII large subunit</fullName>
        <shortName evidence="1">Exonuclease VII large subunit</shortName>
    </alternativeName>
</protein>
<reference key="1">
    <citation type="submission" date="2008-02" db="EMBL/GenBank/DDBJ databases">
        <title>Complete sequence of Escherichia coli C str. ATCC 8739.</title>
        <authorList>
            <person name="Copeland A."/>
            <person name="Lucas S."/>
            <person name="Lapidus A."/>
            <person name="Glavina del Rio T."/>
            <person name="Dalin E."/>
            <person name="Tice H."/>
            <person name="Bruce D."/>
            <person name="Goodwin L."/>
            <person name="Pitluck S."/>
            <person name="Kiss H."/>
            <person name="Brettin T."/>
            <person name="Detter J.C."/>
            <person name="Han C."/>
            <person name="Kuske C.R."/>
            <person name="Schmutz J."/>
            <person name="Larimer F."/>
            <person name="Land M."/>
            <person name="Hauser L."/>
            <person name="Kyrpides N."/>
            <person name="Mikhailova N."/>
            <person name="Ingram L."/>
            <person name="Richardson P."/>
        </authorList>
    </citation>
    <scope>NUCLEOTIDE SEQUENCE [LARGE SCALE GENOMIC DNA]</scope>
    <source>
        <strain>ATCC 8739 / DSM 1576 / NBRC 3972 / NCIMB 8545 / WDCM 00012 / Crooks</strain>
    </source>
</reference>
<organism>
    <name type="scientific">Escherichia coli (strain ATCC 8739 / DSM 1576 / NBRC 3972 / NCIMB 8545 / WDCM 00012 / Crooks)</name>
    <dbReference type="NCBI Taxonomy" id="481805"/>
    <lineage>
        <taxon>Bacteria</taxon>
        <taxon>Pseudomonadati</taxon>
        <taxon>Pseudomonadota</taxon>
        <taxon>Gammaproteobacteria</taxon>
        <taxon>Enterobacterales</taxon>
        <taxon>Enterobacteriaceae</taxon>
        <taxon>Escherichia</taxon>
    </lineage>
</organism>
<gene>
    <name evidence="1" type="primary">xseA</name>
    <name type="ordered locus">EcolC_1168</name>
</gene>
<accession>B1IWF2</accession>
<sequence length="456" mass="51784">MLPSQSPAIFTVSRLNQTVRLLLEHEMGQVWISGEISNFTQPASGHWYFTLKDDTAQVRCAMFRNSNRRVTFRPQHGQQVLVRANITLYEPRGDYQIIVESMQPAGEGLLQQKYEQLKAKLQAEGLFDQQYKKPLPSPAHCVGVITSKTGAALHDILHVLKRRDPSLPVIIYPTAVQGDDAPGQIVRAIELANQRNECDVLIVGRGGGSLEDLWSFNDERVARAIFASRIPVVSAVGHETDVTIADFVADLRAPTPSAAAEVVSRNQQELLRQVQSARQRLEMAMDYYLANRTRRFTQIHHRLQQQHPQLRLARQQTMLERLKKRMSFALENQLKRAGQQQQRLTQRLNQQNPQPKIHRAQTRIQQLEYRLAEILRAQLSATRERFGNAVTHLEAVSPLSTLARGYSVTTATDGNVLKKVKQVKAGEMLTTRLEDGWIESEVKNIQPVKKSRKKVH</sequence>
<proteinExistence type="inferred from homology"/>
<feature type="chain" id="PRO_1000079984" description="Exodeoxyribonuclease 7 large subunit">
    <location>
        <begin position="1"/>
        <end position="456"/>
    </location>
</feature>